<keyword id="KW-0143">Chaperone</keyword>
<keyword id="KW-0963">Cytoplasm</keyword>
<keyword id="KW-1015">Disulfide bond</keyword>
<keyword id="KW-0676">Redox-active center</keyword>
<keyword id="KW-0862">Zinc</keyword>
<feature type="chain" id="PRO_1000119262" description="33 kDa chaperonin">
    <location>
        <begin position="1"/>
        <end position="286"/>
    </location>
</feature>
<feature type="disulfide bond" description="Redox-active" evidence="1">
    <location>
        <begin position="225"/>
        <end position="227"/>
    </location>
</feature>
<feature type="disulfide bond" description="Redox-active" evidence="1">
    <location>
        <begin position="258"/>
        <end position="261"/>
    </location>
</feature>
<gene>
    <name evidence="1" type="primary">hslO</name>
    <name type="ordered locus">Sbal223_0149</name>
</gene>
<comment type="function">
    <text evidence="1">Redox regulated molecular chaperone. Protects both thermally unfolding and oxidatively damaged proteins from irreversible aggregation. Plays an important role in the bacterial defense system toward oxidative stress.</text>
</comment>
<comment type="subcellular location">
    <subcellularLocation>
        <location evidence="1">Cytoplasm</location>
    </subcellularLocation>
</comment>
<comment type="PTM">
    <text evidence="1">Under oxidizing conditions two disulfide bonds are formed involving the reactive cysteines. Under reducing conditions zinc is bound to the reactive cysteines and the protein is inactive.</text>
</comment>
<comment type="similarity">
    <text evidence="1">Belongs to the HSP33 family.</text>
</comment>
<dbReference type="EMBL" id="CP001252">
    <property type="protein sequence ID" value="ACK44690.1"/>
    <property type="molecule type" value="Genomic_DNA"/>
</dbReference>
<dbReference type="RefSeq" id="WP_006084926.1">
    <property type="nucleotide sequence ID" value="NC_011663.1"/>
</dbReference>
<dbReference type="SMR" id="B8E3S8"/>
<dbReference type="GeneID" id="11770510"/>
<dbReference type="KEGG" id="sbp:Sbal223_0149"/>
<dbReference type="HOGENOM" id="CLU_054493_0_0_6"/>
<dbReference type="Proteomes" id="UP000002507">
    <property type="component" value="Chromosome"/>
</dbReference>
<dbReference type="GO" id="GO:0005737">
    <property type="term" value="C:cytoplasm"/>
    <property type="evidence" value="ECO:0007669"/>
    <property type="project" value="UniProtKB-SubCell"/>
</dbReference>
<dbReference type="GO" id="GO:0044183">
    <property type="term" value="F:protein folding chaperone"/>
    <property type="evidence" value="ECO:0007669"/>
    <property type="project" value="TreeGrafter"/>
</dbReference>
<dbReference type="GO" id="GO:0051082">
    <property type="term" value="F:unfolded protein binding"/>
    <property type="evidence" value="ECO:0007669"/>
    <property type="project" value="UniProtKB-UniRule"/>
</dbReference>
<dbReference type="GO" id="GO:0042026">
    <property type="term" value="P:protein refolding"/>
    <property type="evidence" value="ECO:0007669"/>
    <property type="project" value="TreeGrafter"/>
</dbReference>
<dbReference type="CDD" id="cd00498">
    <property type="entry name" value="Hsp33"/>
    <property type="match status" value="1"/>
</dbReference>
<dbReference type="Gene3D" id="1.10.287.480">
    <property type="entry name" value="helix hairpin bin"/>
    <property type="match status" value="1"/>
</dbReference>
<dbReference type="Gene3D" id="3.55.30.10">
    <property type="entry name" value="Hsp33 domain"/>
    <property type="match status" value="1"/>
</dbReference>
<dbReference type="Gene3D" id="3.90.1280.10">
    <property type="entry name" value="HSP33 redox switch-like"/>
    <property type="match status" value="1"/>
</dbReference>
<dbReference type="HAMAP" id="MF_00117">
    <property type="entry name" value="HslO"/>
    <property type="match status" value="1"/>
</dbReference>
<dbReference type="InterPro" id="IPR000397">
    <property type="entry name" value="Heat_shock_Hsp33"/>
</dbReference>
<dbReference type="InterPro" id="IPR016154">
    <property type="entry name" value="Heat_shock_Hsp33_C"/>
</dbReference>
<dbReference type="InterPro" id="IPR016153">
    <property type="entry name" value="Heat_shock_Hsp33_N"/>
</dbReference>
<dbReference type="InterPro" id="IPR023212">
    <property type="entry name" value="Hsp33_helix_hairpin_bin_dom_sf"/>
</dbReference>
<dbReference type="NCBIfam" id="NF001033">
    <property type="entry name" value="PRK00114.1"/>
    <property type="match status" value="1"/>
</dbReference>
<dbReference type="PANTHER" id="PTHR30111">
    <property type="entry name" value="33 KDA CHAPERONIN"/>
    <property type="match status" value="1"/>
</dbReference>
<dbReference type="PANTHER" id="PTHR30111:SF1">
    <property type="entry name" value="33 KDA CHAPERONIN"/>
    <property type="match status" value="1"/>
</dbReference>
<dbReference type="Pfam" id="PF01430">
    <property type="entry name" value="HSP33"/>
    <property type="match status" value="1"/>
</dbReference>
<dbReference type="PIRSF" id="PIRSF005261">
    <property type="entry name" value="Heat_shock_Hsp33"/>
    <property type="match status" value="1"/>
</dbReference>
<dbReference type="SUPFAM" id="SSF64397">
    <property type="entry name" value="Hsp33 domain"/>
    <property type="match status" value="1"/>
</dbReference>
<dbReference type="SUPFAM" id="SSF118352">
    <property type="entry name" value="HSP33 redox switch-like"/>
    <property type="match status" value="1"/>
</dbReference>
<protein>
    <recommendedName>
        <fullName evidence="1">33 kDa chaperonin</fullName>
    </recommendedName>
    <alternativeName>
        <fullName evidence="1">Heat shock protein 33 homolog</fullName>
        <shortName evidence="1">HSP33</shortName>
    </alternativeName>
</protein>
<name>HSLO_SHEB2</name>
<sequence>MNQDTLHRYLFDNADVRGELVQLQDSYQQVISAQEYPAVLQVLLGELMAATSLLTATLKFSGDISVQLQGNGPVSLAVINGNNLQELRGVARWNAELADDASLTDLFGQGYMVITLTPDEGERYQGVVALDKPTLAACVEEYFNQSEQLPTGIWLFADGKQAAGMFLQILPSKEDHNPDFEHLSQLTSTIKAEELFTLDAESVLHRLYHQEEVRLFDPIDVSFKCTCSHERSAGAIKTLDQAEIEAILAEDGKIEMGCEYCHAKYIFDAIDVAALFANGQTSTTQQ</sequence>
<accession>B8E3S8</accession>
<proteinExistence type="inferred from homology"/>
<organism>
    <name type="scientific">Shewanella baltica (strain OS223)</name>
    <dbReference type="NCBI Taxonomy" id="407976"/>
    <lineage>
        <taxon>Bacteria</taxon>
        <taxon>Pseudomonadati</taxon>
        <taxon>Pseudomonadota</taxon>
        <taxon>Gammaproteobacteria</taxon>
        <taxon>Alteromonadales</taxon>
        <taxon>Shewanellaceae</taxon>
        <taxon>Shewanella</taxon>
    </lineage>
</organism>
<reference key="1">
    <citation type="submission" date="2008-12" db="EMBL/GenBank/DDBJ databases">
        <title>Complete sequence of chromosome of Shewanella baltica OS223.</title>
        <authorList>
            <consortium name="US DOE Joint Genome Institute"/>
            <person name="Lucas S."/>
            <person name="Copeland A."/>
            <person name="Lapidus A."/>
            <person name="Glavina del Rio T."/>
            <person name="Dalin E."/>
            <person name="Tice H."/>
            <person name="Bruce D."/>
            <person name="Goodwin L."/>
            <person name="Pitluck S."/>
            <person name="Chertkov O."/>
            <person name="Meincke L."/>
            <person name="Brettin T."/>
            <person name="Detter J.C."/>
            <person name="Han C."/>
            <person name="Kuske C.R."/>
            <person name="Larimer F."/>
            <person name="Land M."/>
            <person name="Hauser L."/>
            <person name="Kyrpides N."/>
            <person name="Ovchinnikova G."/>
            <person name="Brettar I."/>
            <person name="Rodrigues J."/>
            <person name="Konstantinidis K."/>
            <person name="Tiedje J."/>
        </authorList>
    </citation>
    <scope>NUCLEOTIDE SEQUENCE [LARGE SCALE GENOMIC DNA]</scope>
    <source>
        <strain>OS223</strain>
    </source>
</reference>
<evidence type="ECO:0000255" key="1">
    <source>
        <dbReference type="HAMAP-Rule" id="MF_00117"/>
    </source>
</evidence>